<feature type="chain" id="PRO_1000074265" description="tRNA sulfurtransferase">
    <location>
        <begin position="1"/>
        <end position="484"/>
    </location>
</feature>
<feature type="domain" description="THUMP" evidence="1">
    <location>
        <begin position="63"/>
        <end position="167"/>
    </location>
</feature>
<feature type="domain" description="Rhodanese" evidence="1">
    <location>
        <begin position="406"/>
        <end position="484"/>
    </location>
</feature>
<feature type="active site" description="Cysteine persulfide intermediate" evidence="1">
    <location>
        <position position="458"/>
    </location>
</feature>
<feature type="binding site" evidence="1">
    <location>
        <begin position="185"/>
        <end position="186"/>
    </location>
    <ligand>
        <name>ATP</name>
        <dbReference type="ChEBI" id="CHEBI:30616"/>
    </ligand>
</feature>
<feature type="binding site" evidence="1">
    <location>
        <position position="267"/>
    </location>
    <ligand>
        <name>ATP</name>
        <dbReference type="ChEBI" id="CHEBI:30616"/>
    </ligand>
</feature>
<feature type="binding site" evidence="1">
    <location>
        <position position="289"/>
    </location>
    <ligand>
        <name>ATP</name>
        <dbReference type="ChEBI" id="CHEBI:30616"/>
    </ligand>
</feature>
<feature type="binding site" evidence="1">
    <location>
        <position position="298"/>
    </location>
    <ligand>
        <name>ATP</name>
        <dbReference type="ChEBI" id="CHEBI:30616"/>
    </ligand>
</feature>
<feature type="disulfide bond" description="Redox-active" evidence="1">
    <location>
        <begin position="346"/>
        <end position="458"/>
    </location>
</feature>
<organism>
    <name type="scientific">Shewanella baltica (strain OS195)</name>
    <dbReference type="NCBI Taxonomy" id="399599"/>
    <lineage>
        <taxon>Bacteria</taxon>
        <taxon>Pseudomonadati</taxon>
        <taxon>Pseudomonadota</taxon>
        <taxon>Gammaproteobacteria</taxon>
        <taxon>Alteromonadales</taxon>
        <taxon>Shewanellaceae</taxon>
        <taxon>Shewanella</taxon>
    </lineage>
</organism>
<evidence type="ECO:0000255" key="1">
    <source>
        <dbReference type="HAMAP-Rule" id="MF_00021"/>
    </source>
</evidence>
<reference key="1">
    <citation type="submission" date="2007-11" db="EMBL/GenBank/DDBJ databases">
        <title>Complete sequence of chromosome of Shewanella baltica OS195.</title>
        <authorList>
            <consortium name="US DOE Joint Genome Institute"/>
            <person name="Copeland A."/>
            <person name="Lucas S."/>
            <person name="Lapidus A."/>
            <person name="Barry K."/>
            <person name="Glavina del Rio T."/>
            <person name="Dalin E."/>
            <person name="Tice H."/>
            <person name="Pitluck S."/>
            <person name="Chain P."/>
            <person name="Malfatti S."/>
            <person name="Shin M."/>
            <person name="Vergez L."/>
            <person name="Schmutz J."/>
            <person name="Larimer F."/>
            <person name="Land M."/>
            <person name="Hauser L."/>
            <person name="Kyrpides N."/>
            <person name="Kim E."/>
            <person name="Brettar I."/>
            <person name="Rodrigues J."/>
            <person name="Konstantinidis K."/>
            <person name="Klappenbach J."/>
            <person name="Hofle M."/>
            <person name="Tiedje J."/>
            <person name="Richardson P."/>
        </authorList>
    </citation>
    <scope>NUCLEOTIDE SEQUENCE [LARGE SCALE GENOMIC DNA]</scope>
    <source>
        <strain>OS195</strain>
    </source>
</reference>
<accession>A9KTM0</accession>
<sequence length="484" mass="55047">MKFIVKLYPEIMMKSKPVRMRFTKMLETNIRNVLKKVDEDAKVQRQWDRIMVMVPKDKPELAQAFGERLACIPGIAHVVQVDEYSFESVDDIYQQVLPVYRDQLAGKTFCVRVKRTGDHDFNSIEVERYVGGGLNQFTDALGVRLKNPDITVNLEIERDNLYMVTKRIEGLGGFPMATQEDVLSLISGGFDSGVSSYQFIKKGARTHYCFFNLGGAQHEIGVKQVAYHLWKTYGESHKVKFISVPFEPVVAEILERIDNGQMGVVLKRMMMRTAARIADRMGIQALVTGESLGQVSSQTLTNLNVIDRCTELLILRPLIAMDKQDIINESRKIGTEDFAKSMPEYCGVISQKPTVKAVLAKVEAEEKKFSEDLIDQIIAQSVTIDIREIAEQMDTRITETETVASIDTNQVVIDIRAPEEEESKPLQIEGIEIKRIPFFKLATQFADLDKQKTYLLYCERGVMSKLQALYLIEQGYTNVKVYRP</sequence>
<keyword id="KW-0067">ATP-binding</keyword>
<keyword id="KW-0963">Cytoplasm</keyword>
<keyword id="KW-1015">Disulfide bond</keyword>
<keyword id="KW-0547">Nucleotide-binding</keyword>
<keyword id="KW-0676">Redox-active center</keyword>
<keyword id="KW-0694">RNA-binding</keyword>
<keyword id="KW-0784">Thiamine biosynthesis</keyword>
<keyword id="KW-0808">Transferase</keyword>
<keyword id="KW-0820">tRNA-binding</keyword>
<dbReference type="EC" id="2.8.1.4" evidence="1"/>
<dbReference type="EMBL" id="CP000891">
    <property type="protein sequence ID" value="ABX48561.1"/>
    <property type="molecule type" value="Genomic_DNA"/>
</dbReference>
<dbReference type="RefSeq" id="WP_006080887.1">
    <property type="nucleotide sequence ID" value="NC_009997.1"/>
</dbReference>
<dbReference type="SMR" id="A9KTM0"/>
<dbReference type="GeneID" id="11771642"/>
<dbReference type="KEGG" id="sbn:Sbal195_1387"/>
<dbReference type="HOGENOM" id="CLU_037952_4_1_6"/>
<dbReference type="UniPathway" id="UPA00060"/>
<dbReference type="Proteomes" id="UP000000770">
    <property type="component" value="Chromosome"/>
</dbReference>
<dbReference type="GO" id="GO:0005829">
    <property type="term" value="C:cytosol"/>
    <property type="evidence" value="ECO:0007669"/>
    <property type="project" value="TreeGrafter"/>
</dbReference>
<dbReference type="GO" id="GO:0005524">
    <property type="term" value="F:ATP binding"/>
    <property type="evidence" value="ECO:0007669"/>
    <property type="project" value="UniProtKB-UniRule"/>
</dbReference>
<dbReference type="GO" id="GO:0004810">
    <property type="term" value="F:CCA tRNA nucleotidyltransferase activity"/>
    <property type="evidence" value="ECO:0007669"/>
    <property type="project" value="InterPro"/>
</dbReference>
<dbReference type="GO" id="GO:0000049">
    <property type="term" value="F:tRNA binding"/>
    <property type="evidence" value="ECO:0007669"/>
    <property type="project" value="UniProtKB-UniRule"/>
</dbReference>
<dbReference type="GO" id="GO:0140741">
    <property type="term" value="F:tRNA-uracil-4 sulfurtransferase activity"/>
    <property type="evidence" value="ECO:0007669"/>
    <property type="project" value="UniProtKB-EC"/>
</dbReference>
<dbReference type="GO" id="GO:0009228">
    <property type="term" value="P:thiamine biosynthetic process"/>
    <property type="evidence" value="ECO:0007669"/>
    <property type="project" value="UniProtKB-KW"/>
</dbReference>
<dbReference type="GO" id="GO:0009229">
    <property type="term" value="P:thiamine diphosphate biosynthetic process"/>
    <property type="evidence" value="ECO:0007669"/>
    <property type="project" value="UniProtKB-UniRule"/>
</dbReference>
<dbReference type="GO" id="GO:0052837">
    <property type="term" value="P:thiazole biosynthetic process"/>
    <property type="evidence" value="ECO:0007669"/>
    <property type="project" value="InterPro"/>
</dbReference>
<dbReference type="GO" id="GO:0002937">
    <property type="term" value="P:tRNA 4-thiouridine biosynthesis"/>
    <property type="evidence" value="ECO:0007669"/>
    <property type="project" value="TreeGrafter"/>
</dbReference>
<dbReference type="CDD" id="cd01712">
    <property type="entry name" value="PPase_ThiI"/>
    <property type="match status" value="1"/>
</dbReference>
<dbReference type="CDD" id="cd00158">
    <property type="entry name" value="RHOD"/>
    <property type="match status" value="1"/>
</dbReference>
<dbReference type="CDD" id="cd11716">
    <property type="entry name" value="THUMP_ThiI"/>
    <property type="match status" value="1"/>
</dbReference>
<dbReference type="FunFam" id="3.30.2130.30:FF:000002">
    <property type="entry name" value="tRNA sulfurtransferase"/>
    <property type="match status" value="1"/>
</dbReference>
<dbReference type="FunFam" id="3.40.250.10:FF:000003">
    <property type="entry name" value="tRNA sulfurtransferase"/>
    <property type="match status" value="1"/>
</dbReference>
<dbReference type="FunFam" id="3.40.50.620:FF:000029">
    <property type="entry name" value="tRNA sulfurtransferase"/>
    <property type="match status" value="1"/>
</dbReference>
<dbReference type="Gene3D" id="3.30.2130.30">
    <property type="match status" value="1"/>
</dbReference>
<dbReference type="Gene3D" id="3.40.50.620">
    <property type="entry name" value="HUPs"/>
    <property type="match status" value="1"/>
</dbReference>
<dbReference type="Gene3D" id="3.40.250.10">
    <property type="entry name" value="Rhodanese-like domain"/>
    <property type="match status" value="1"/>
</dbReference>
<dbReference type="HAMAP" id="MF_00021">
    <property type="entry name" value="ThiI"/>
    <property type="match status" value="1"/>
</dbReference>
<dbReference type="InterPro" id="IPR001763">
    <property type="entry name" value="Rhodanese-like_dom"/>
</dbReference>
<dbReference type="InterPro" id="IPR036873">
    <property type="entry name" value="Rhodanese-like_dom_sf"/>
</dbReference>
<dbReference type="InterPro" id="IPR014729">
    <property type="entry name" value="Rossmann-like_a/b/a_fold"/>
</dbReference>
<dbReference type="InterPro" id="IPR020536">
    <property type="entry name" value="ThiI_AANH"/>
</dbReference>
<dbReference type="InterPro" id="IPR054173">
    <property type="entry name" value="ThiI_fer"/>
</dbReference>
<dbReference type="InterPro" id="IPR049961">
    <property type="entry name" value="ThiI_N"/>
</dbReference>
<dbReference type="InterPro" id="IPR026340">
    <property type="entry name" value="THII_Thiazole_biosynth_dom"/>
</dbReference>
<dbReference type="InterPro" id="IPR004114">
    <property type="entry name" value="THUMP_dom"/>
</dbReference>
<dbReference type="InterPro" id="IPR049962">
    <property type="entry name" value="THUMP_ThiI"/>
</dbReference>
<dbReference type="InterPro" id="IPR003720">
    <property type="entry name" value="tRNA_STrfase"/>
</dbReference>
<dbReference type="InterPro" id="IPR050102">
    <property type="entry name" value="tRNA_sulfurtransferase_ThiI"/>
</dbReference>
<dbReference type="NCBIfam" id="TIGR04271">
    <property type="entry name" value="ThiI_C_thiazole"/>
    <property type="match status" value="1"/>
</dbReference>
<dbReference type="NCBIfam" id="TIGR00342">
    <property type="entry name" value="tRNA uracil 4-sulfurtransferase ThiI"/>
    <property type="match status" value="1"/>
</dbReference>
<dbReference type="PANTHER" id="PTHR43209">
    <property type="entry name" value="TRNA SULFURTRANSFERASE"/>
    <property type="match status" value="1"/>
</dbReference>
<dbReference type="PANTHER" id="PTHR43209:SF1">
    <property type="entry name" value="TRNA SULFURTRANSFERASE"/>
    <property type="match status" value="1"/>
</dbReference>
<dbReference type="Pfam" id="PF00581">
    <property type="entry name" value="Rhodanese"/>
    <property type="match status" value="1"/>
</dbReference>
<dbReference type="Pfam" id="PF02568">
    <property type="entry name" value="ThiI"/>
    <property type="match status" value="1"/>
</dbReference>
<dbReference type="Pfam" id="PF22025">
    <property type="entry name" value="ThiI_fer"/>
    <property type="match status" value="1"/>
</dbReference>
<dbReference type="Pfam" id="PF02926">
    <property type="entry name" value="THUMP"/>
    <property type="match status" value="1"/>
</dbReference>
<dbReference type="SMART" id="SM00981">
    <property type="entry name" value="THUMP"/>
    <property type="match status" value="1"/>
</dbReference>
<dbReference type="SUPFAM" id="SSF52402">
    <property type="entry name" value="Adenine nucleotide alpha hydrolases-like"/>
    <property type="match status" value="1"/>
</dbReference>
<dbReference type="SUPFAM" id="SSF52821">
    <property type="entry name" value="Rhodanese/Cell cycle control phosphatase"/>
    <property type="match status" value="1"/>
</dbReference>
<dbReference type="SUPFAM" id="SSF143437">
    <property type="entry name" value="THUMP domain-like"/>
    <property type="match status" value="1"/>
</dbReference>
<dbReference type="PROSITE" id="PS50206">
    <property type="entry name" value="RHODANESE_3"/>
    <property type="match status" value="1"/>
</dbReference>
<dbReference type="PROSITE" id="PS51165">
    <property type="entry name" value="THUMP"/>
    <property type="match status" value="1"/>
</dbReference>
<comment type="function">
    <text evidence="1">Catalyzes the ATP-dependent transfer of a sulfur to tRNA to produce 4-thiouridine in position 8 of tRNAs, which functions as a near-UV photosensor. Also catalyzes the transfer of sulfur to the sulfur carrier protein ThiS, forming ThiS-thiocarboxylate. This is a step in the synthesis of thiazole, in the thiamine biosynthesis pathway. The sulfur is donated as persulfide by IscS.</text>
</comment>
<comment type="catalytic activity">
    <reaction evidence="1">
        <text>[ThiI sulfur-carrier protein]-S-sulfanyl-L-cysteine + a uridine in tRNA + 2 reduced [2Fe-2S]-[ferredoxin] + ATP + H(+) = [ThiI sulfur-carrier protein]-L-cysteine + a 4-thiouridine in tRNA + 2 oxidized [2Fe-2S]-[ferredoxin] + AMP + diphosphate</text>
        <dbReference type="Rhea" id="RHEA:24176"/>
        <dbReference type="Rhea" id="RHEA-COMP:10000"/>
        <dbReference type="Rhea" id="RHEA-COMP:10001"/>
        <dbReference type="Rhea" id="RHEA-COMP:13337"/>
        <dbReference type="Rhea" id="RHEA-COMP:13338"/>
        <dbReference type="Rhea" id="RHEA-COMP:13339"/>
        <dbReference type="Rhea" id="RHEA-COMP:13340"/>
        <dbReference type="ChEBI" id="CHEBI:15378"/>
        <dbReference type="ChEBI" id="CHEBI:29950"/>
        <dbReference type="ChEBI" id="CHEBI:30616"/>
        <dbReference type="ChEBI" id="CHEBI:33019"/>
        <dbReference type="ChEBI" id="CHEBI:33737"/>
        <dbReference type="ChEBI" id="CHEBI:33738"/>
        <dbReference type="ChEBI" id="CHEBI:61963"/>
        <dbReference type="ChEBI" id="CHEBI:65315"/>
        <dbReference type="ChEBI" id="CHEBI:136798"/>
        <dbReference type="ChEBI" id="CHEBI:456215"/>
        <dbReference type="EC" id="2.8.1.4"/>
    </reaction>
</comment>
<comment type="catalytic activity">
    <reaction evidence="1">
        <text>[ThiS sulfur-carrier protein]-C-terminal Gly-Gly-AMP + S-sulfanyl-L-cysteinyl-[cysteine desulfurase] + AH2 = [ThiS sulfur-carrier protein]-C-terminal-Gly-aminoethanethioate + L-cysteinyl-[cysteine desulfurase] + A + AMP + 2 H(+)</text>
        <dbReference type="Rhea" id="RHEA:43340"/>
        <dbReference type="Rhea" id="RHEA-COMP:12157"/>
        <dbReference type="Rhea" id="RHEA-COMP:12158"/>
        <dbReference type="Rhea" id="RHEA-COMP:12910"/>
        <dbReference type="Rhea" id="RHEA-COMP:19908"/>
        <dbReference type="ChEBI" id="CHEBI:13193"/>
        <dbReference type="ChEBI" id="CHEBI:15378"/>
        <dbReference type="ChEBI" id="CHEBI:17499"/>
        <dbReference type="ChEBI" id="CHEBI:29950"/>
        <dbReference type="ChEBI" id="CHEBI:61963"/>
        <dbReference type="ChEBI" id="CHEBI:90618"/>
        <dbReference type="ChEBI" id="CHEBI:232372"/>
        <dbReference type="ChEBI" id="CHEBI:456215"/>
    </reaction>
</comment>
<comment type="pathway">
    <text evidence="1">Cofactor biosynthesis; thiamine diphosphate biosynthesis.</text>
</comment>
<comment type="subcellular location">
    <subcellularLocation>
        <location evidence="1">Cytoplasm</location>
    </subcellularLocation>
</comment>
<comment type="similarity">
    <text evidence="1">Belongs to the ThiI family.</text>
</comment>
<protein>
    <recommendedName>
        <fullName evidence="1">tRNA sulfurtransferase</fullName>
        <ecNumber evidence="1">2.8.1.4</ecNumber>
    </recommendedName>
    <alternativeName>
        <fullName evidence="1">Sulfur carrier protein ThiS sulfurtransferase</fullName>
    </alternativeName>
    <alternativeName>
        <fullName evidence="1">Thiamine biosynthesis protein ThiI</fullName>
    </alternativeName>
    <alternativeName>
        <fullName evidence="1">tRNA 4-thiouridine synthase</fullName>
    </alternativeName>
</protein>
<proteinExistence type="inferred from homology"/>
<name>THII_SHEB9</name>
<gene>
    <name evidence="1" type="primary">thiI</name>
    <name type="ordered locus">Sbal195_1387</name>
</gene>